<dbReference type="EC" id="3.1.3.5"/>
<dbReference type="EMBL" id="BA000022">
    <property type="protein sequence ID" value="BAA17480.1"/>
    <property type="molecule type" value="Genomic_DNA"/>
</dbReference>
<dbReference type="PIR" id="S77377">
    <property type="entry name" value="S77377"/>
</dbReference>
<dbReference type="SMR" id="P73440"/>
<dbReference type="STRING" id="1148.gene:10498345"/>
<dbReference type="PaxDb" id="1148-1652559"/>
<dbReference type="EnsemblBacteria" id="BAA17480">
    <property type="protein sequence ID" value="BAA17480"/>
    <property type="gene ID" value="BAA17480"/>
</dbReference>
<dbReference type="KEGG" id="syn:sll1459"/>
<dbReference type="eggNOG" id="COG0496">
    <property type="taxonomic scope" value="Bacteria"/>
</dbReference>
<dbReference type="InParanoid" id="P73440"/>
<dbReference type="PhylomeDB" id="P73440"/>
<dbReference type="Proteomes" id="UP000001425">
    <property type="component" value="Chromosome"/>
</dbReference>
<dbReference type="GO" id="GO:0005737">
    <property type="term" value="C:cytoplasm"/>
    <property type="evidence" value="ECO:0007669"/>
    <property type="project" value="UniProtKB-SubCell"/>
</dbReference>
<dbReference type="GO" id="GO:0008253">
    <property type="term" value="F:5'-nucleotidase activity"/>
    <property type="evidence" value="ECO:0007669"/>
    <property type="project" value="UniProtKB-EC"/>
</dbReference>
<dbReference type="GO" id="GO:0046872">
    <property type="term" value="F:metal ion binding"/>
    <property type="evidence" value="ECO:0007669"/>
    <property type="project" value="UniProtKB-KW"/>
</dbReference>
<dbReference type="GO" id="GO:0000166">
    <property type="term" value="F:nucleotide binding"/>
    <property type="evidence" value="ECO:0007669"/>
    <property type="project" value="UniProtKB-KW"/>
</dbReference>
<dbReference type="Gene3D" id="3.40.1210.10">
    <property type="entry name" value="Survival protein SurE-like phosphatase/nucleotidase"/>
    <property type="match status" value="1"/>
</dbReference>
<dbReference type="InterPro" id="IPR030048">
    <property type="entry name" value="SurE"/>
</dbReference>
<dbReference type="InterPro" id="IPR002828">
    <property type="entry name" value="SurE-like_Pase/nucleotidase"/>
</dbReference>
<dbReference type="InterPro" id="IPR036523">
    <property type="entry name" value="SurE-like_sf"/>
</dbReference>
<dbReference type="NCBIfam" id="NF001493">
    <property type="entry name" value="PRK00346.2-3"/>
    <property type="match status" value="1"/>
</dbReference>
<dbReference type="NCBIfam" id="TIGR00087">
    <property type="entry name" value="surE"/>
    <property type="match status" value="1"/>
</dbReference>
<dbReference type="PANTHER" id="PTHR30457">
    <property type="entry name" value="5'-NUCLEOTIDASE SURE"/>
    <property type="match status" value="1"/>
</dbReference>
<dbReference type="PANTHER" id="PTHR30457:SF0">
    <property type="entry name" value="PHOSPHATASE, PUTATIVE (AFU_ORTHOLOGUE AFUA_4G01070)-RELATED"/>
    <property type="match status" value="1"/>
</dbReference>
<dbReference type="Pfam" id="PF01975">
    <property type="entry name" value="SurE"/>
    <property type="match status" value="1"/>
</dbReference>
<dbReference type="SUPFAM" id="SSF64167">
    <property type="entry name" value="SurE-like"/>
    <property type="match status" value="1"/>
</dbReference>
<name>Y1459_SYNY3</name>
<gene>
    <name type="ordered locus">sll1459</name>
</gene>
<organism>
    <name type="scientific">Synechocystis sp. (strain ATCC 27184 / PCC 6803 / Kazusa)</name>
    <dbReference type="NCBI Taxonomy" id="1111708"/>
    <lineage>
        <taxon>Bacteria</taxon>
        <taxon>Bacillati</taxon>
        <taxon>Cyanobacteriota</taxon>
        <taxon>Cyanophyceae</taxon>
        <taxon>Synechococcales</taxon>
        <taxon>Merismopediaceae</taxon>
        <taxon>Synechocystis</taxon>
    </lineage>
</organism>
<comment type="function">
    <text evidence="1">Nucleotidase that shows phosphatase activity on nucleoside 5'-monophosphates.</text>
</comment>
<comment type="catalytic activity">
    <reaction>
        <text>a ribonucleoside 5'-phosphate + H2O = a ribonucleoside + phosphate</text>
        <dbReference type="Rhea" id="RHEA:12484"/>
        <dbReference type="ChEBI" id="CHEBI:15377"/>
        <dbReference type="ChEBI" id="CHEBI:18254"/>
        <dbReference type="ChEBI" id="CHEBI:43474"/>
        <dbReference type="ChEBI" id="CHEBI:58043"/>
        <dbReference type="EC" id="3.1.3.5"/>
    </reaction>
</comment>
<comment type="cofactor">
    <cofactor evidence="1">
        <name>a divalent metal cation</name>
        <dbReference type="ChEBI" id="CHEBI:60240"/>
    </cofactor>
    <text evidence="1">Binds 1 divalent metal cation per subunit.</text>
</comment>
<comment type="subcellular location">
    <subcellularLocation>
        <location evidence="2">Cytoplasm</location>
    </subcellularLocation>
</comment>
<comment type="similarity">
    <text evidence="2">Belongs to the SurE nucleotidase family.</text>
</comment>
<proteinExistence type="inferred from homology"/>
<protein>
    <recommendedName>
        <fullName>Putative 5'-nucleotidase alr3139</fullName>
        <ecNumber>3.1.3.5</ecNumber>
    </recommendedName>
    <alternativeName>
        <fullName>Nucleoside 5'-monophosphate phosphohydrolase</fullName>
    </alternativeName>
</protein>
<reference key="1">
    <citation type="journal article" date="1996" name="DNA Res.">
        <title>Sequence analysis of the genome of the unicellular cyanobacterium Synechocystis sp. strain PCC6803. II. Sequence determination of the entire genome and assignment of potential protein-coding regions.</title>
        <authorList>
            <person name="Kaneko T."/>
            <person name="Sato S."/>
            <person name="Kotani H."/>
            <person name="Tanaka A."/>
            <person name="Asamizu E."/>
            <person name="Nakamura Y."/>
            <person name="Miyajima N."/>
            <person name="Hirosawa M."/>
            <person name="Sugiura M."/>
            <person name="Sasamoto S."/>
            <person name="Kimura T."/>
            <person name="Hosouchi T."/>
            <person name="Matsuno A."/>
            <person name="Muraki A."/>
            <person name="Nakazaki N."/>
            <person name="Naruo K."/>
            <person name="Okumura S."/>
            <person name="Shimpo S."/>
            <person name="Takeuchi C."/>
            <person name="Wada T."/>
            <person name="Watanabe A."/>
            <person name="Yamada M."/>
            <person name="Yasuda M."/>
            <person name="Tabata S."/>
        </authorList>
    </citation>
    <scope>NUCLEOTIDE SEQUENCE [LARGE SCALE GENOMIC DNA]</scope>
    <source>
        <strain>ATCC 27184 / PCC 6803 / Kazusa</strain>
    </source>
</reference>
<keyword id="KW-0963">Cytoplasm</keyword>
<keyword id="KW-0378">Hydrolase</keyword>
<keyword id="KW-0479">Metal-binding</keyword>
<keyword id="KW-0547">Nucleotide-binding</keyword>
<keyword id="KW-1185">Reference proteome</keyword>
<accession>P73440</accession>
<feature type="chain" id="PRO_0000111873" description="Putative 5'-nucleotidase alr3139">
    <location>
        <begin position="1"/>
        <end position="225"/>
    </location>
</feature>
<feature type="binding site" evidence="1">
    <location>
        <position position="8"/>
    </location>
    <ligand>
        <name>a divalent metal cation</name>
        <dbReference type="ChEBI" id="CHEBI:60240"/>
    </ligand>
</feature>
<feature type="binding site" evidence="1">
    <location>
        <position position="9"/>
    </location>
    <ligand>
        <name>a divalent metal cation</name>
        <dbReference type="ChEBI" id="CHEBI:60240"/>
    </ligand>
</feature>
<feature type="binding site" evidence="1">
    <location>
        <position position="37"/>
    </location>
    <ligand>
        <name>a divalent metal cation</name>
        <dbReference type="ChEBI" id="CHEBI:60240"/>
    </ligand>
</feature>
<feature type="binding site" evidence="1">
    <location>
        <position position="88"/>
    </location>
    <ligand>
        <name>a divalent metal cation</name>
        <dbReference type="ChEBI" id="CHEBI:60240"/>
    </ligand>
</feature>
<evidence type="ECO:0000250" key="1"/>
<evidence type="ECO:0000305" key="2"/>
<sequence length="225" mass="24907">MNFLLTNDDGIDAPGIEALYEALGKRGVWVAPKNQHSGCGHKVTTDQAIAVEQRGKNRYAVDGTPADCTRLGVVHFYPEVDWVIAGINAGGNMGIDSYLSGTVAAVREAAILGHKAIAISHWINKPRTINWAWASHWANAVFNTLWQQDLPPQHFWNVNLPHWQSGDPEPEVIFCEPSRDPLPVAFTIEGSNFFYRGEYSQRPRQPGSDIDVCFSGNIAITQLRV</sequence>